<protein>
    <recommendedName>
        <fullName>Sensory transduction protein LytR</fullName>
    </recommendedName>
</protein>
<keyword id="KW-0963">Cytoplasm</keyword>
<keyword id="KW-0238">DNA-binding</keyword>
<keyword id="KW-0597">Phosphoprotein</keyword>
<keyword id="KW-1185">Reference proteome</keyword>
<keyword id="KW-0804">Transcription</keyword>
<keyword id="KW-0805">Transcription regulation</keyword>
<keyword id="KW-0902">Two-component regulatory system</keyword>
<organism>
    <name type="scientific">Streptococcus mutans serotype c (strain ATCC 700610 / UA159)</name>
    <dbReference type="NCBI Taxonomy" id="210007"/>
    <lineage>
        <taxon>Bacteria</taxon>
        <taxon>Bacillati</taxon>
        <taxon>Bacillota</taxon>
        <taxon>Bacilli</taxon>
        <taxon>Lactobacillales</taxon>
        <taxon>Streptococcaceae</taxon>
        <taxon>Streptococcus</taxon>
    </lineage>
</organism>
<accession>Q8DVB7</accession>
<comment type="function">
    <text evidence="1">Member of the two-component regulatory system LytR/LytS that probably regulates genes involved in cell wall metabolism.</text>
</comment>
<comment type="subcellular location">
    <subcellularLocation>
        <location evidence="1">Cytoplasm</location>
    </subcellularLocation>
</comment>
<comment type="PTM">
    <text evidence="1">Phosphorylated by LytS.</text>
</comment>
<name>LYTR_STRMU</name>
<gene>
    <name type="primary">lytR</name>
    <name type="ordered locus">SMU_576</name>
</gene>
<proteinExistence type="inferred from homology"/>
<sequence>MNILILDDEMLARQELTFLIQQSKELDHPDIFEAEDISSAEKILFRQQIDLIFLDISLSEENGFTLANQLEQLAHPPLVVFATAYDHYAVKAFESNAADYILKPFEQGRVDKALAKVKKIQHLSTIDETATTEKKGMELLTLTLADRSIVLKMPDIVAASIEDGELTVSTKNTSYTIKKTLNWFKTRAKTNYFLQIHRNTVVNLEMIQEIQPWFNHTLLLVMVNGEKFPVGRSYMKELNAHLTL</sequence>
<reference key="1">
    <citation type="journal article" date="2002" name="Proc. Natl. Acad. Sci. U.S.A.">
        <title>Genome sequence of Streptococcus mutans UA159, a cariogenic dental pathogen.</title>
        <authorList>
            <person name="Ajdic D.J."/>
            <person name="McShan W.M."/>
            <person name="McLaughlin R.E."/>
            <person name="Savic G."/>
            <person name="Chang J."/>
            <person name="Carson M.B."/>
            <person name="Primeaux C."/>
            <person name="Tian R."/>
            <person name="Kenton S."/>
            <person name="Jia H.G."/>
            <person name="Lin S.P."/>
            <person name="Qian Y."/>
            <person name="Li S."/>
            <person name="Zhu H."/>
            <person name="Najar F.Z."/>
            <person name="Lai H."/>
            <person name="White J."/>
            <person name="Roe B.A."/>
            <person name="Ferretti J.J."/>
        </authorList>
    </citation>
    <scope>NUCLEOTIDE SEQUENCE [LARGE SCALE GENOMIC DNA]</scope>
    <source>
        <strain>ATCC 700610 / UA159</strain>
    </source>
</reference>
<dbReference type="EMBL" id="AE014133">
    <property type="protein sequence ID" value="AAN58317.1"/>
    <property type="molecule type" value="Genomic_DNA"/>
</dbReference>
<dbReference type="RefSeq" id="NP_721011.1">
    <property type="nucleotide sequence ID" value="NC_004350.2"/>
</dbReference>
<dbReference type="RefSeq" id="WP_002262110.1">
    <property type="nucleotide sequence ID" value="NC_004350.2"/>
</dbReference>
<dbReference type="SMR" id="Q8DVB7"/>
<dbReference type="STRING" id="210007.SMU_576"/>
<dbReference type="DNASU" id="1029508"/>
<dbReference type="GeneID" id="93859857"/>
<dbReference type="KEGG" id="smu:SMU_576"/>
<dbReference type="PATRIC" id="fig|210007.7.peg.511"/>
<dbReference type="eggNOG" id="COG3279">
    <property type="taxonomic scope" value="Bacteria"/>
</dbReference>
<dbReference type="HOGENOM" id="CLU_000445_14_1_9"/>
<dbReference type="OrthoDB" id="9809318at2"/>
<dbReference type="PhylomeDB" id="Q8DVB7"/>
<dbReference type="Proteomes" id="UP000002512">
    <property type="component" value="Chromosome"/>
</dbReference>
<dbReference type="GO" id="GO:0005737">
    <property type="term" value="C:cytoplasm"/>
    <property type="evidence" value="ECO:0007669"/>
    <property type="project" value="UniProtKB-SubCell"/>
</dbReference>
<dbReference type="GO" id="GO:0003677">
    <property type="term" value="F:DNA binding"/>
    <property type="evidence" value="ECO:0007669"/>
    <property type="project" value="UniProtKB-KW"/>
</dbReference>
<dbReference type="GO" id="GO:0000156">
    <property type="term" value="F:phosphorelay response regulator activity"/>
    <property type="evidence" value="ECO:0007669"/>
    <property type="project" value="InterPro"/>
</dbReference>
<dbReference type="Gene3D" id="2.20.25.10">
    <property type="match status" value="1"/>
</dbReference>
<dbReference type="Gene3D" id="2.40.50.40">
    <property type="match status" value="1"/>
</dbReference>
<dbReference type="Gene3D" id="3.40.50.2300">
    <property type="match status" value="1"/>
</dbReference>
<dbReference type="InterPro" id="IPR011006">
    <property type="entry name" value="CheY-like_superfamily"/>
</dbReference>
<dbReference type="InterPro" id="IPR046947">
    <property type="entry name" value="LytR-like"/>
</dbReference>
<dbReference type="InterPro" id="IPR007492">
    <property type="entry name" value="LytTR_DNA-bd_dom"/>
</dbReference>
<dbReference type="InterPro" id="IPR001789">
    <property type="entry name" value="Sig_transdc_resp-reg_receiver"/>
</dbReference>
<dbReference type="PANTHER" id="PTHR37299:SF1">
    <property type="entry name" value="STAGE 0 SPORULATION PROTEIN A HOMOLOG"/>
    <property type="match status" value="1"/>
</dbReference>
<dbReference type="PANTHER" id="PTHR37299">
    <property type="entry name" value="TRANSCRIPTIONAL REGULATOR-RELATED"/>
    <property type="match status" value="1"/>
</dbReference>
<dbReference type="Pfam" id="PF04397">
    <property type="entry name" value="LytTR"/>
    <property type="match status" value="1"/>
</dbReference>
<dbReference type="Pfam" id="PF00072">
    <property type="entry name" value="Response_reg"/>
    <property type="match status" value="1"/>
</dbReference>
<dbReference type="SMART" id="SM00850">
    <property type="entry name" value="LytTR"/>
    <property type="match status" value="1"/>
</dbReference>
<dbReference type="SMART" id="SM00448">
    <property type="entry name" value="REC"/>
    <property type="match status" value="1"/>
</dbReference>
<dbReference type="SUPFAM" id="SSF52172">
    <property type="entry name" value="CheY-like"/>
    <property type="match status" value="1"/>
</dbReference>
<dbReference type="PROSITE" id="PS50930">
    <property type="entry name" value="HTH_LYTTR"/>
    <property type="match status" value="1"/>
</dbReference>
<dbReference type="PROSITE" id="PS50110">
    <property type="entry name" value="RESPONSE_REGULATORY"/>
    <property type="match status" value="1"/>
</dbReference>
<evidence type="ECO:0000250" key="1"/>
<evidence type="ECO:0000255" key="2">
    <source>
        <dbReference type="PROSITE-ProRule" id="PRU00112"/>
    </source>
</evidence>
<evidence type="ECO:0000255" key="3">
    <source>
        <dbReference type="PROSITE-ProRule" id="PRU00169"/>
    </source>
</evidence>
<feature type="chain" id="PRO_0000081137" description="Sensory transduction protein LytR">
    <location>
        <begin position="1"/>
        <end position="244"/>
    </location>
</feature>
<feature type="domain" description="Response regulatory" evidence="3">
    <location>
        <begin position="2"/>
        <end position="118"/>
    </location>
</feature>
<feature type="domain" description="HTH LytTR-type" evidence="2">
    <location>
        <begin position="140"/>
        <end position="244"/>
    </location>
</feature>
<feature type="modified residue" description="4-aspartylphosphate" evidence="3">
    <location>
        <position position="55"/>
    </location>
</feature>